<organism>
    <name type="scientific">Thermotoga petrophila (strain ATCC BAA-488 / DSM 13995 / JCM 10881 / RKU-1)</name>
    <dbReference type="NCBI Taxonomy" id="390874"/>
    <lineage>
        <taxon>Bacteria</taxon>
        <taxon>Thermotogati</taxon>
        <taxon>Thermotogota</taxon>
        <taxon>Thermotogae</taxon>
        <taxon>Thermotogales</taxon>
        <taxon>Thermotogaceae</taxon>
        <taxon>Thermotoga</taxon>
    </lineage>
</organism>
<gene>
    <name evidence="1" type="primary">clpP</name>
    <name type="ordered locus">Tpet_0235</name>
</gene>
<reference key="1">
    <citation type="submission" date="2007-05" db="EMBL/GenBank/DDBJ databases">
        <title>Complete sequence of Thermotoga petrophila RKU-1.</title>
        <authorList>
            <consortium name="US DOE Joint Genome Institute"/>
            <person name="Copeland A."/>
            <person name="Lucas S."/>
            <person name="Lapidus A."/>
            <person name="Barry K."/>
            <person name="Glavina del Rio T."/>
            <person name="Dalin E."/>
            <person name="Tice H."/>
            <person name="Pitluck S."/>
            <person name="Sims D."/>
            <person name="Brettin T."/>
            <person name="Bruce D."/>
            <person name="Detter J.C."/>
            <person name="Han C."/>
            <person name="Tapia R."/>
            <person name="Schmutz J."/>
            <person name="Larimer F."/>
            <person name="Land M."/>
            <person name="Hauser L."/>
            <person name="Kyrpides N."/>
            <person name="Mikhailova N."/>
            <person name="Nelson K."/>
            <person name="Gogarten J.P."/>
            <person name="Noll K."/>
            <person name="Richardson P."/>
        </authorList>
    </citation>
    <scope>NUCLEOTIDE SEQUENCE [LARGE SCALE GENOMIC DNA]</scope>
    <source>
        <strain>ATCC BAA-488 / DSM 13995 / JCM 10881 / RKU-1</strain>
    </source>
</reference>
<protein>
    <recommendedName>
        <fullName evidence="1">ATP-dependent Clp protease proteolytic subunit</fullName>
        <ecNumber evidence="1">3.4.21.92</ecNumber>
    </recommendedName>
    <alternativeName>
        <fullName evidence="1">Endopeptidase Clp</fullName>
    </alternativeName>
</protein>
<name>CLPP_THEP1</name>
<comment type="function">
    <text evidence="1">Cleaves peptides in various proteins in a process that requires ATP hydrolysis. Has a chymotrypsin-like activity. Plays a major role in the degradation of misfolded proteins.</text>
</comment>
<comment type="catalytic activity">
    <reaction evidence="1">
        <text>Hydrolysis of proteins to small peptides in the presence of ATP and magnesium. alpha-casein is the usual test substrate. In the absence of ATP, only oligopeptides shorter than five residues are hydrolyzed (such as succinyl-Leu-Tyr-|-NHMec, and Leu-Tyr-Leu-|-Tyr-Trp, in which cleavage of the -Tyr-|-Leu- and -Tyr-|-Trp bonds also occurs).</text>
        <dbReference type="EC" id="3.4.21.92"/>
    </reaction>
</comment>
<comment type="subunit">
    <text evidence="1">Fourteen ClpP subunits assemble into 2 heptameric rings which stack back to back to give a disk-like structure with a central cavity, resembling the structure of eukaryotic proteasomes.</text>
</comment>
<comment type="subcellular location">
    <subcellularLocation>
        <location evidence="1">Cytoplasm</location>
    </subcellularLocation>
</comment>
<comment type="similarity">
    <text evidence="1">Belongs to the peptidase S14 family.</text>
</comment>
<accession>A5IJ91</accession>
<evidence type="ECO:0000255" key="1">
    <source>
        <dbReference type="HAMAP-Rule" id="MF_00444"/>
    </source>
</evidence>
<dbReference type="EC" id="3.4.21.92" evidence="1"/>
<dbReference type="EMBL" id="CP000702">
    <property type="protein sequence ID" value="ABQ46264.1"/>
    <property type="molecule type" value="Genomic_DNA"/>
</dbReference>
<dbReference type="RefSeq" id="WP_004081059.1">
    <property type="nucleotide sequence ID" value="NC_009486.1"/>
</dbReference>
<dbReference type="SMR" id="A5IJ91"/>
<dbReference type="STRING" id="390874.Tpet_0235"/>
<dbReference type="MEROPS" id="S14.001"/>
<dbReference type="KEGG" id="tpt:Tpet_0235"/>
<dbReference type="eggNOG" id="COG0740">
    <property type="taxonomic scope" value="Bacteria"/>
</dbReference>
<dbReference type="HOGENOM" id="CLU_058707_3_2_0"/>
<dbReference type="Proteomes" id="UP000006558">
    <property type="component" value="Chromosome"/>
</dbReference>
<dbReference type="GO" id="GO:0005737">
    <property type="term" value="C:cytoplasm"/>
    <property type="evidence" value="ECO:0007669"/>
    <property type="project" value="UniProtKB-SubCell"/>
</dbReference>
<dbReference type="GO" id="GO:0009368">
    <property type="term" value="C:endopeptidase Clp complex"/>
    <property type="evidence" value="ECO:0007669"/>
    <property type="project" value="TreeGrafter"/>
</dbReference>
<dbReference type="GO" id="GO:0004176">
    <property type="term" value="F:ATP-dependent peptidase activity"/>
    <property type="evidence" value="ECO:0007669"/>
    <property type="project" value="InterPro"/>
</dbReference>
<dbReference type="GO" id="GO:0051117">
    <property type="term" value="F:ATPase binding"/>
    <property type="evidence" value="ECO:0007669"/>
    <property type="project" value="TreeGrafter"/>
</dbReference>
<dbReference type="GO" id="GO:0004252">
    <property type="term" value="F:serine-type endopeptidase activity"/>
    <property type="evidence" value="ECO:0007669"/>
    <property type="project" value="UniProtKB-UniRule"/>
</dbReference>
<dbReference type="GO" id="GO:0006515">
    <property type="term" value="P:protein quality control for misfolded or incompletely synthesized proteins"/>
    <property type="evidence" value="ECO:0007669"/>
    <property type="project" value="TreeGrafter"/>
</dbReference>
<dbReference type="CDD" id="cd07017">
    <property type="entry name" value="S14_ClpP_2"/>
    <property type="match status" value="1"/>
</dbReference>
<dbReference type="FunFam" id="3.90.226.10:FF:000001">
    <property type="entry name" value="ATP-dependent Clp protease proteolytic subunit"/>
    <property type="match status" value="1"/>
</dbReference>
<dbReference type="Gene3D" id="3.90.226.10">
    <property type="entry name" value="2-enoyl-CoA Hydratase, Chain A, domain 1"/>
    <property type="match status" value="1"/>
</dbReference>
<dbReference type="HAMAP" id="MF_00444">
    <property type="entry name" value="ClpP"/>
    <property type="match status" value="1"/>
</dbReference>
<dbReference type="InterPro" id="IPR001907">
    <property type="entry name" value="ClpP"/>
</dbReference>
<dbReference type="InterPro" id="IPR029045">
    <property type="entry name" value="ClpP/crotonase-like_dom_sf"/>
</dbReference>
<dbReference type="InterPro" id="IPR023562">
    <property type="entry name" value="ClpP/TepA"/>
</dbReference>
<dbReference type="InterPro" id="IPR033135">
    <property type="entry name" value="ClpP_His_AS"/>
</dbReference>
<dbReference type="InterPro" id="IPR018215">
    <property type="entry name" value="ClpP_Ser_AS"/>
</dbReference>
<dbReference type="NCBIfam" id="TIGR00493">
    <property type="entry name" value="clpP"/>
    <property type="match status" value="1"/>
</dbReference>
<dbReference type="NCBIfam" id="NF001368">
    <property type="entry name" value="PRK00277.1"/>
    <property type="match status" value="1"/>
</dbReference>
<dbReference type="NCBIfam" id="NF009205">
    <property type="entry name" value="PRK12553.1"/>
    <property type="match status" value="1"/>
</dbReference>
<dbReference type="PANTHER" id="PTHR10381">
    <property type="entry name" value="ATP-DEPENDENT CLP PROTEASE PROTEOLYTIC SUBUNIT"/>
    <property type="match status" value="1"/>
</dbReference>
<dbReference type="PANTHER" id="PTHR10381:SF70">
    <property type="entry name" value="ATP-DEPENDENT CLP PROTEASE PROTEOLYTIC SUBUNIT"/>
    <property type="match status" value="1"/>
</dbReference>
<dbReference type="Pfam" id="PF00574">
    <property type="entry name" value="CLP_protease"/>
    <property type="match status" value="1"/>
</dbReference>
<dbReference type="PRINTS" id="PR00127">
    <property type="entry name" value="CLPPROTEASEP"/>
</dbReference>
<dbReference type="SUPFAM" id="SSF52096">
    <property type="entry name" value="ClpP/crotonase"/>
    <property type="match status" value="1"/>
</dbReference>
<dbReference type="PROSITE" id="PS00382">
    <property type="entry name" value="CLP_PROTEASE_HIS"/>
    <property type="match status" value="1"/>
</dbReference>
<dbReference type="PROSITE" id="PS00381">
    <property type="entry name" value="CLP_PROTEASE_SER"/>
    <property type="match status" value="1"/>
</dbReference>
<feature type="chain" id="PRO_1000026142" description="ATP-dependent Clp protease proteolytic subunit">
    <location>
        <begin position="1"/>
        <end position="203"/>
    </location>
</feature>
<feature type="active site" description="Nucleophile" evidence="1">
    <location>
        <position position="107"/>
    </location>
</feature>
<feature type="active site" evidence="1">
    <location>
        <position position="132"/>
    </location>
</feature>
<sequence>MTVKEKKIIDQYVPIVVESTGRYERAYDIFSRLLKDRIVFLGSPIDDYVANLVIAQLLFLEAEDPDKDVYLYINSPGGSVTAGLAIYDTMQYIKCDVSTICVGQAASMAAVLLAAGAKGKRYALPNARIMIHQPLGGAEGPAKDVEIITRELLRIKDLLNRILSKHTGQPIEKIEKDTDRDFFMSAEEAKEYGIVDKVVSTRE</sequence>
<proteinExistence type="inferred from homology"/>
<keyword id="KW-0963">Cytoplasm</keyword>
<keyword id="KW-0378">Hydrolase</keyword>
<keyword id="KW-0645">Protease</keyword>
<keyword id="KW-0720">Serine protease</keyword>